<comment type="function">
    <text evidence="3">Catalyzes the final rate-limiting step of glycolysis by mediating the transfer of a phosphoryl group from phosphoenolpyruvate (PEP) to ADP, generating ATP. The ratio between the highly active tetrameric form and nearly inactive dimeric form determines whether glucose carbons are channeled to biosynthetic processes or used for glycolytic ATP production. The transition between the 2 forms contributes to the control of glycolysis and is important for tumor cell proliferation and survival.</text>
</comment>
<comment type="function">
    <molecule>Isoform M2</molecule>
    <text evidence="3 5">Isoform specifically expressed during embryogenesis that has low pyruvate kinase activity by itself and requires allosteric activation by D-fructose 1,6-bisphosphate (FBP) for pyruvate kinase activity. In addition to its pyruvate kinase activity in the cytoplasm, also acts as a regulator of transcription in the nucleus by acting as a protein kinase. Translocates into the nucleus in response to various signals, such as EGF receptor activation, and homodimerizes, leading to its conversion into a protein threonine- and tyrosine-protein kinase. Catalyzes phosphorylation of STAT3 at 'Tyr-705' and histone H3 at 'Thr-11' (H3T11ph), leading to activate transcription. Its ability to activate transcription plays a role in cancer cells by promoting cell proliferation and promote tumorigenesis (By similarity). Promotes the expression of the immune checkpoint protein CD274 in BMAL1-deficient macrophages. May also act as a translation regulator for a subset of mRNAs, independently of its pyruvate kinase activity: associates with subpools of endoplasmic reticulum-associated ribosomes, binds directly to the mRNAs translated at the endoplasmic reticulum and promotes translation of these endoplasmic reticulum-destined mRNAs (By similarity). Plays a role in caspase independent cell death of tumor cells (By similarity).</text>
</comment>
<comment type="function">
    <molecule>Isoform M1</molecule>
    <text evidence="3">Pyruvate kinase isoform expressed in adult tissues, which replaces isoform M2 after birth. In contrast to isoform M2, has high pyruvate kinase activity by itself and does not require allosteric activation by D-fructose 1,6-bisphosphate (FBP) for activity.</text>
</comment>
<comment type="catalytic activity">
    <molecule>Isoform M2</molecule>
    <reaction evidence="3">
        <text>pyruvate + ATP = phosphoenolpyruvate + ADP + H(+)</text>
        <dbReference type="Rhea" id="RHEA:18157"/>
        <dbReference type="ChEBI" id="CHEBI:15361"/>
        <dbReference type="ChEBI" id="CHEBI:15378"/>
        <dbReference type="ChEBI" id="CHEBI:30616"/>
        <dbReference type="ChEBI" id="CHEBI:58702"/>
        <dbReference type="ChEBI" id="CHEBI:456216"/>
        <dbReference type="EC" id="2.7.1.40"/>
    </reaction>
    <physiologicalReaction direction="right-to-left" evidence="3">
        <dbReference type="Rhea" id="RHEA:18159"/>
    </physiologicalReaction>
</comment>
<comment type="catalytic activity">
    <molecule>Isoform M1</molecule>
    <reaction evidence="3">
        <text>pyruvate + ATP = phosphoenolpyruvate + ADP + H(+)</text>
        <dbReference type="Rhea" id="RHEA:18157"/>
        <dbReference type="ChEBI" id="CHEBI:15361"/>
        <dbReference type="ChEBI" id="CHEBI:15378"/>
        <dbReference type="ChEBI" id="CHEBI:30616"/>
        <dbReference type="ChEBI" id="CHEBI:58702"/>
        <dbReference type="ChEBI" id="CHEBI:456216"/>
        <dbReference type="EC" id="2.7.1.40"/>
    </reaction>
</comment>
<comment type="catalytic activity">
    <molecule>Isoform M2</molecule>
    <reaction evidence="3">
        <text>L-tyrosyl-[protein] + ATP = O-phospho-L-tyrosyl-[protein] + ADP + H(+)</text>
        <dbReference type="Rhea" id="RHEA:10596"/>
        <dbReference type="Rhea" id="RHEA-COMP:10136"/>
        <dbReference type="Rhea" id="RHEA-COMP:20101"/>
        <dbReference type="ChEBI" id="CHEBI:15378"/>
        <dbReference type="ChEBI" id="CHEBI:30616"/>
        <dbReference type="ChEBI" id="CHEBI:46858"/>
        <dbReference type="ChEBI" id="CHEBI:61978"/>
        <dbReference type="ChEBI" id="CHEBI:456216"/>
        <dbReference type="EC" id="2.7.10.2"/>
    </reaction>
    <physiologicalReaction direction="left-to-right" evidence="3">
        <dbReference type="Rhea" id="RHEA:10597"/>
    </physiologicalReaction>
</comment>
<comment type="catalytic activity">
    <molecule>Isoform M2</molecule>
    <reaction evidence="3">
        <text>L-threonyl-[protein] + ATP = O-phospho-L-threonyl-[protein] + ADP + H(+)</text>
        <dbReference type="Rhea" id="RHEA:46608"/>
        <dbReference type="Rhea" id="RHEA-COMP:11060"/>
        <dbReference type="Rhea" id="RHEA-COMP:11605"/>
        <dbReference type="ChEBI" id="CHEBI:15378"/>
        <dbReference type="ChEBI" id="CHEBI:30013"/>
        <dbReference type="ChEBI" id="CHEBI:30616"/>
        <dbReference type="ChEBI" id="CHEBI:61977"/>
        <dbReference type="ChEBI" id="CHEBI:456216"/>
        <dbReference type="EC" id="2.7.11.1"/>
    </reaction>
    <physiologicalReaction direction="left-to-right" evidence="3">
        <dbReference type="Rhea" id="RHEA:46609"/>
    </physiologicalReaction>
</comment>
<comment type="cofactor">
    <cofactor evidence="3">
        <name>Mg(2+)</name>
        <dbReference type="ChEBI" id="CHEBI:18420"/>
    </cofactor>
</comment>
<comment type="cofactor">
    <cofactor evidence="3">
        <name>K(+)</name>
        <dbReference type="ChEBI" id="CHEBI:29103"/>
    </cofactor>
</comment>
<comment type="activity regulation">
    <molecule>Isoform M2</molecule>
    <text evidence="3">Isoform M2 is allosterically activated by D-fructose 1,6-bisphosphate (FBP). Inhibited by oxalate and 3,3',5-triiodo-L-thyronine (T3). The activity of the tetrameric form is inhibited by PML. Selective binding to tyrosine-phosphorylated peptides releases the allosteric activator FBP, leading to inhibition of PKM enzymatic activity, this diverts glucose metabolites from energy production to anabolic processes when cells are stimulated by certain growth factors. Glycolytic flux are highly dependent on de novo biosynthesis of serine and glycine, and serine is a natural ligand and allosteric activator of isoform M2.</text>
</comment>
<comment type="activity regulation">
    <molecule>Isoform M1</molecule>
    <text evidence="3">Has high pyruvate kinase activity by itself and does not require allosteric activation by D-fructose 1,6-bisphosphate (FBP) for activity.</text>
</comment>
<comment type="pathway">
    <text evidence="3">Carbohydrate degradation; glycolysis; pyruvate from D-glyceraldehyde 3-phosphate: step 5/5.</text>
</comment>
<comment type="subunit">
    <molecule>Isoform M2</molecule>
    <text evidence="3">Monomer and homotetramer; exists as a monomer in the absence of D-fructose 1,6-bisphosphate (FBP), and reversibly associates to form a homotetramer in the presence of FBP. The monomeric form binds 3,3',5-triiodo-L-thyronine (T3). Tetramer formation induces pyruvate kinase activity. The tetrameric form has high affinity for the substrate and is associated within the glycolytic enzyme complex. FBP stimulates the formation of tetramers from dimers. Homodimer; exists in a dimeric form in tumor cells and the dimeric form has less affinity for the phosphoenolpyruvate substrate. The homodimer converts into a protein kinase. Interacts with HERC1, POU5F1 and PML. Interacts with EGLN3; the interaction hydroxylates PKM under hypoxia and enhances binding to HIF1A. Interacts with HIF1A; the interaction is enhanced by binding of EGLN3, promoting enhanced transcription activity under hypoxia. Interacts with TRIM35; this interaction prevents FGFR1-dependent tyrosine phosphorylation. Interacts with JMJD8. Interacts with TRAF4. Interacts with (phosphorylated) CTNNB1; leading to activate transcription. Interacts with TSC22D2; the interaction results in reduced nuclear levels of PKM isoform M2, leading to repression of cyclin CCND1 transcription and reduced cell growth (By similarity).</text>
</comment>
<comment type="subcellular location">
    <molecule>Isoform M2</molecule>
    <subcellularLocation>
        <location evidence="3">Cytoplasm</location>
    </subcellularLocation>
    <subcellularLocation>
        <location evidence="3">Nucleus</location>
    </subcellularLocation>
    <text evidence="3">Translocates to the nucleus in response to various signals, such as EGF receptor activation or apoptotic stimuli.</text>
</comment>
<comment type="subcellular location">
    <molecule>Isoform M1</molecule>
    <subcellularLocation>
        <location evidence="3">Cytoplasm</location>
    </subcellularLocation>
</comment>
<comment type="alternative products">
    <event type="alternative splicing"/>
    <isoform>
        <id>P11979-1</id>
        <name>M1</name>
        <name>PKM1</name>
        <sequence type="displayed"/>
    </isoform>
    <isoform>
        <id>P11979-2</id>
        <name>M2</name>
        <name>PKM2</name>
        <sequence type="not described"/>
    </isoform>
</comment>
<comment type="PTM">
    <text evidence="3">ISGylated.</text>
</comment>
<comment type="PTM">
    <text evidence="3">Under hypoxia, hydroxylated by EGLN3.</text>
</comment>
<comment type="PTM">
    <text evidence="3">Acetylation at Lys-305 is stimulated by high glucose concentration, it decreases enzyme activity and promotes its lysosomal-dependent degradation via chaperone-mediated autophagy.</text>
</comment>
<comment type="PTM">
    <molecule>Isoform M2</molecule>
    <text evidence="3">Acetylated by EP300, leading to impair phosphoenolpyruvate substrate-binding and promote its homodimerization and subsequent translocation to the nucleus. Deacetylation by SIRT6 promotes its nuclear export into the cytoplasm, leading to suppress its nuclear localization and oncogenic function.</text>
</comment>
<comment type="PTM">
    <molecule>Isoform M2</molecule>
    <text evidence="3">S-nitrosylation inhibits homotetramerization and pyruvate kinase activity (By similarity). S-nitrosylation is indirectly inhibited by AKR1A1 which degrades S-nitroso-CoA, a cofactor required to S-nitrosylate proteins (By similarity).</text>
</comment>
<comment type="PTM">
    <text evidence="3">FGFR1-dependent tyrosine phosphorylation is reduced by interaction with TRIM35.</text>
</comment>
<comment type="miscellaneous">
    <text evidence="3">There are 4 isozymes of pyruvate kinase in mammals (L, R, M1, M2) encoded by 2 different genes: PKLR and PKM. The L and R isozymes are generated from the PKLR by differential splicing of RNA; the M1 and M2 forms are produced from the PKM gene by differential splicing. L type is major isozyme in the liver, R is found in red cells, M1 is the main form in muscle, heart and brain, and M2 is found in early fetal tissues as well as in most cancer cells.</text>
</comment>
<comment type="similarity">
    <text evidence="7">Belongs to the pyruvate kinase family.</text>
</comment>
<accession>P11979</accession>
<gene>
    <name type="primary">PKM</name>
    <name type="synonym">PKM2</name>
</gene>
<name>KPYM_FELCA</name>
<dbReference type="EC" id="2.7.1.40"/>
<dbReference type="EC" id="2.7.11.1" evidence="3"/>
<dbReference type="EC" id="2.7.10.2" evidence="3"/>
<dbReference type="PIR" id="A25091">
    <property type="entry name" value="A25091"/>
</dbReference>
<dbReference type="PDB" id="1PKM">
    <property type="method" value="X-ray"/>
    <property type="resolution" value="2.60 A"/>
    <property type="chains" value="A=2-531"/>
</dbReference>
<dbReference type="PDBsum" id="1PKM"/>
<dbReference type="SMR" id="P11979"/>
<dbReference type="STRING" id="9685.ENSFCAP00000041670"/>
<dbReference type="iPTMnet" id="P11979"/>
<dbReference type="PaxDb" id="9685-ENSFCAP00000000606"/>
<dbReference type="eggNOG" id="KOG2323">
    <property type="taxonomic scope" value="Eukaryota"/>
</dbReference>
<dbReference type="InParanoid" id="P11979"/>
<dbReference type="TreeFam" id="TF300390"/>
<dbReference type="UniPathway" id="UPA00109">
    <property type="reaction ID" value="UER00188"/>
</dbReference>
<dbReference type="EvolutionaryTrace" id="P11979"/>
<dbReference type="Proteomes" id="UP000011712">
    <property type="component" value="Unplaced"/>
</dbReference>
<dbReference type="GO" id="GO:0005737">
    <property type="term" value="C:cytoplasm"/>
    <property type="evidence" value="ECO:0000318"/>
    <property type="project" value="GO_Central"/>
</dbReference>
<dbReference type="GO" id="GO:0005634">
    <property type="term" value="C:nucleus"/>
    <property type="evidence" value="ECO:0007669"/>
    <property type="project" value="UniProtKB-SubCell"/>
</dbReference>
<dbReference type="GO" id="GO:0005791">
    <property type="term" value="C:rough endoplasmic reticulum"/>
    <property type="evidence" value="ECO:0000250"/>
    <property type="project" value="UniProtKB"/>
</dbReference>
<dbReference type="GO" id="GO:0005524">
    <property type="term" value="F:ATP binding"/>
    <property type="evidence" value="ECO:0007669"/>
    <property type="project" value="UniProtKB-KW"/>
</dbReference>
<dbReference type="GO" id="GO:0000287">
    <property type="term" value="F:magnesium ion binding"/>
    <property type="evidence" value="ECO:0007669"/>
    <property type="project" value="InterPro"/>
</dbReference>
<dbReference type="GO" id="GO:0003729">
    <property type="term" value="F:mRNA binding"/>
    <property type="evidence" value="ECO:0000250"/>
    <property type="project" value="UniProtKB"/>
</dbReference>
<dbReference type="GO" id="GO:0030955">
    <property type="term" value="F:potassium ion binding"/>
    <property type="evidence" value="ECO:0007669"/>
    <property type="project" value="InterPro"/>
</dbReference>
<dbReference type="GO" id="GO:0004713">
    <property type="term" value="F:protein tyrosine kinase activity"/>
    <property type="evidence" value="ECO:0007669"/>
    <property type="project" value="RHEA"/>
</dbReference>
<dbReference type="GO" id="GO:0004743">
    <property type="term" value="F:pyruvate kinase activity"/>
    <property type="evidence" value="ECO:0000318"/>
    <property type="project" value="GO_Central"/>
</dbReference>
<dbReference type="GO" id="GO:0032869">
    <property type="term" value="P:cellular response to insulin stimulus"/>
    <property type="evidence" value="ECO:0000318"/>
    <property type="project" value="GO_Central"/>
</dbReference>
<dbReference type="GO" id="GO:0006096">
    <property type="term" value="P:glycolytic process"/>
    <property type="evidence" value="ECO:0000318"/>
    <property type="project" value="GO_Central"/>
</dbReference>
<dbReference type="GO" id="GO:2000767">
    <property type="term" value="P:positive regulation of cytoplasmic translation"/>
    <property type="evidence" value="ECO:0000250"/>
    <property type="project" value="UniProtKB"/>
</dbReference>
<dbReference type="GO" id="GO:1903672">
    <property type="term" value="P:positive regulation of sprouting angiogenesis"/>
    <property type="evidence" value="ECO:0000250"/>
    <property type="project" value="UniProtKB"/>
</dbReference>
<dbReference type="CDD" id="cd00288">
    <property type="entry name" value="Pyruvate_Kinase"/>
    <property type="match status" value="1"/>
</dbReference>
<dbReference type="FunFam" id="3.20.20.60:FF:000025">
    <property type="entry name" value="Pyruvate kinase"/>
    <property type="match status" value="1"/>
</dbReference>
<dbReference type="FunFam" id="3.40.1380.20:FF:000001">
    <property type="entry name" value="Pyruvate kinase"/>
    <property type="match status" value="1"/>
</dbReference>
<dbReference type="FunFam" id="3.40.1380.20:FF:000002">
    <property type="entry name" value="Pyruvate kinase"/>
    <property type="match status" value="1"/>
</dbReference>
<dbReference type="FunFam" id="2.40.33.10:FF:000023">
    <property type="entry name" value="Pyruvate kinase PKM"/>
    <property type="match status" value="1"/>
</dbReference>
<dbReference type="Gene3D" id="3.20.20.60">
    <property type="entry name" value="Phosphoenolpyruvate-binding domains"/>
    <property type="match status" value="1"/>
</dbReference>
<dbReference type="Gene3D" id="2.40.33.10">
    <property type="entry name" value="PK beta-barrel domain-like"/>
    <property type="match status" value="1"/>
</dbReference>
<dbReference type="Gene3D" id="3.40.1380.20">
    <property type="entry name" value="Pyruvate kinase, C-terminal domain"/>
    <property type="match status" value="2"/>
</dbReference>
<dbReference type="InterPro" id="IPR001697">
    <property type="entry name" value="Pyr_Knase"/>
</dbReference>
<dbReference type="InterPro" id="IPR015813">
    <property type="entry name" value="Pyrv/PenolPyrv_kinase-like_dom"/>
</dbReference>
<dbReference type="InterPro" id="IPR040442">
    <property type="entry name" value="Pyrv_kinase-like_dom_sf"/>
</dbReference>
<dbReference type="InterPro" id="IPR011037">
    <property type="entry name" value="Pyrv_Knase-like_insert_dom_sf"/>
</dbReference>
<dbReference type="InterPro" id="IPR018209">
    <property type="entry name" value="Pyrv_Knase_AS"/>
</dbReference>
<dbReference type="InterPro" id="IPR015793">
    <property type="entry name" value="Pyrv_Knase_brl"/>
</dbReference>
<dbReference type="InterPro" id="IPR015795">
    <property type="entry name" value="Pyrv_Knase_C"/>
</dbReference>
<dbReference type="InterPro" id="IPR036918">
    <property type="entry name" value="Pyrv_Knase_C_sf"/>
</dbReference>
<dbReference type="InterPro" id="IPR015806">
    <property type="entry name" value="Pyrv_Knase_insert_dom_sf"/>
</dbReference>
<dbReference type="NCBIfam" id="NF004491">
    <property type="entry name" value="PRK05826.1"/>
    <property type="match status" value="1"/>
</dbReference>
<dbReference type="NCBIfam" id="NF004978">
    <property type="entry name" value="PRK06354.1"/>
    <property type="match status" value="1"/>
</dbReference>
<dbReference type="NCBIfam" id="TIGR01064">
    <property type="entry name" value="pyruv_kin"/>
    <property type="match status" value="1"/>
</dbReference>
<dbReference type="PANTHER" id="PTHR11817">
    <property type="entry name" value="PYRUVATE KINASE"/>
    <property type="match status" value="1"/>
</dbReference>
<dbReference type="Pfam" id="PF00224">
    <property type="entry name" value="PK"/>
    <property type="match status" value="1"/>
</dbReference>
<dbReference type="Pfam" id="PF02887">
    <property type="entry name" value="PK_C"/>
    <property type="match status" value="1"/>
</dbReference>
<dbReference type="PRINTS" id="PR01050">
    <property type="entry name" value="PYRUVTKNASE"/>
</dbReference>
<dbReference type="SUPFAM" id="SSF51621">
    <property type="entry name" value="Phosphoenolpyruvate/pyruvate domain"/>
    <property type="match status" value="1"/>
</dbReference>
<dbReference type="SUPFAM" id="SSF50800">
    <property type="entry name" value="PK beta-barrel domain-like"/>
    <property type="match status" value="1"/>
</dbReference>
<dbReference type="SUPFAM" id="SSF52935">
    <property type="entry name" value="PK C-terminal domain-like"/>
    <property type="match status" value="1"/>
</dbReference>
<dbReference type="PROSITE" id="PS00110">
    <property type="entry name" value="PYRUVATE_KINASE"/>
    <property type="match status" value="1"/>
</dbReference>
<feature type="initiator methionine" description="Removed" evidence="6">
    <location>
        <position position="1"/>
    </location>
</feature>
<feature type="chain" id="PRO_0000112087" description="Pyruvate kinase PKM">
    <location>
        <begin position="2"/>
        <end position="531"/>
    </location>
</feature>
<feature type="region of interest" description="Interaction with POU5F1" evidence="3">
    <location>
        <begin position="307"/>
        <end position="531"/>
    </location>
</feature>
<feature type="binding site" evidence="3">
    <location>
        <position position="70"/>
    </location>
    <ligand>
        <name>L-serine</name>
        <dbReference type="ChEBI" id="CHEBI:33384"/>
    </ligand>
</feature>
<feature type="binding site" evidence="4">
    <location>
        <position position="73"/>
    </location>
    <ligand>
        <name>substrate</name>
    </ligand>
</feature>
<feature type="binding site" evidence="3">
    <location>
        <begin position="75"/>
        <end position="78"/>
    </location>
    <ligand>
        <name>ATP</name>
        <dbReference type="ChEBI" id="CHEBI:30616"/>
    </ligand>
</feature>
<feature type="binding site" evidence="3">
    <location>
        <position position="75"/>
    </location>
    <ligand>
        <name>K(+)</name>
        <dbReference type="ChEBI" id="CHEBI:29103"/>
    </ligand>
</feature>
<feature type="binding site" evidence="3">
    <location>
        <position position="77"/>
    </location>
    <ligand>
        <name>K(+)</name>
        <dbReference type="ChEBI" id="CHEBI:29103"/>
    </ligand>
</feature>
<feature type="binding site" evidence="3">
    <location>
        <position position="106"/>
    </location>
    <ligand>
        <name>L-serine</name>
        <dbReference type="ChEBI" id="CHEBI:33384"/>
    </ligand>
</feature>
<feature type="binding site" evidence="3">
    <location>
        <position position="113"/>
    </location>
    <ligand>
        <name>K(+)</name>
        <dbReference type="ChEBI" id="CHEBI:29103"/>
    </ligand>
</feature>
<feature type="binding site" evidence="3">
    <location>
        <position position="114"/>
    </location>
    <ligand>
        <name>K(+)</name>
        <dbReference type="ChEBI" id="CHEBI:29103"/>
    </ligand>
</feature>
<feature type="binding site" evidence="3">
    <location>
        <position position="120"/>
    </location>
    <ligand>
        <name>ATP</name>
        <dbReference type="ChEBI" id="CHEBI:30616"/>
    </ligand>
</feature>
<feature type="binding site" evidence="3">
    <location>
        <position position="207"/>
    </location>
    <ligand>
        <name>ATP</name>
        <dbReference type="ChEBI" id="CHEBI:30616"/>
    </ligand>
</feature>
<feature type="binding site" evidence="4">
    <location>
        <position position="270"/>
    </location>
    <ligand>
        <name>substrate</name>
    </ligand>
</feature>
<feature type="binding site" evidence="3">
    <location>
        <position position="272"/>
    </location>
    <ligand>
        <name>Mg(2+)</name>
        <dbReference type="ChEBI" id="CHEBI:18420"/>
    </ligand>
</feature>
<feature type="binding site" evidence="4">
    <location>
        <position position="295"/>
    </location>
    <ligand>
        <name>substrate</name>
    </ligand>
</feature>
<feature type="binding site" evidence="3">
    <location>
        <position position="296"/>
    </location>
    <ligand>
        <name>Mg(2+)</name>
        <dbReference type="ChEBI" id="CHEBI:18420"/>
    </ligand>
</feature>
<feature type="binding site" evidence="4">
    <location>
        <position position="296"/>
    </location>
    <ligand>
        <name>substrate</name>
    </ligand>
</feature>
<feature type="binding site" evidence="4">
    <location>
        <position position="328"/>
    </location>
    <ligand>
        <name>substrate</name>
    </ligand>
</feature>
<feature type="binding site" evidence="3">
    <location>
        <begin position="432"/>
        <end position="437"/>
    </location>
    <ligand>
        <name>beta-D-fructose 1,6-bisphosphate</name>
        <dbReference type="ChEBI" id="CHEBI:32966"/>
        <note>allosteric activator</note>
    </ligand>
</feature>
<feature type="binding site" evidence="3">
    <location>
        <position position="464"/>
    </location>
    <ligand>
        <name>L-serine</name>
        <dbReference type="ChEBI" id="CHEBI:33384"/>
    </ligand>
</feature>
<feature type="binding site" evidence="3">
    <location>
        <position position="482"/>
    </location>
    <ligand>
        <name>beta-D-fructose 1,6-bisphosphate</name>
        <dbReference type="ChEBI" id="CHEBI:32966"/>
        <note>allosteric activator</note>
    </ligand>
</feature>
<feature type="binding site" evidence="3">
    <location>
        <position position="489"/>
    </location>
    <ligand>
        <name>beta-D-fructose 1,6-bisphosphate</name>
        <dbReference type="ChEBI" id="CHEBI:32966"/>
        <note>allosteric activator</note>
    </ligand>
</feature>
<feature type="binding site" evidence="3">
    <location>
        <begin position="516"/>
        <end position="521"/>
    </location>
    <ligand>
        <name>beta-D-fructose 1,6-bisphosphate</name>
        <dbReference type="ChEBI" id="CHEBI:32966"/>
        <note>allosteric activator</note>
    </ligand>
</feature>
<feature type="site" description="Transition state stabilizer" evidence="1">
    <location>
        <position position="270"/>
    </location>
</feature>
<feature type="modified residue" description="N-acetylserine" evidence="6">
    <location>
        <position position="2"/>
    </location>
</feature>
<feature type="modified residue" description="N6,N6,N6-trimethyllysine" evidence="3">
    <location>
        <position position="3"/>
    </location>
</feature>
<feature type="modified residue" description="Phosphoserine" evidence="3">
    <location>
        <position position="37"/>
    </location>
</feature>
<feature type="modified residue" description="Phosphothreonine" evidence="3">
    <location>
        <position position="41"/>
    </location>
</feature>
<feature type="modified residue" description="N6-acetyllysine" evidence="3">
    <location>
        <position position="62"/>
    </location>
</feature>
<feature type="modified residue" description="N6-succinyllysine" evidence="5">
    <location>
        <position position="66"/>
    </location>
</feature>
<feature type="modified residue" description="N6-acetyllysine" evidence="3">
    <location>
        <position position="89"/>
    </location>
</feature>
<feature type="modified residue" description="Phosphoserine" evidence="2">
    <location>
        <position position="97"/>
    </location>
</feature>
<feature type="modified residue" description="Phosphoserine" evidence="2">
    <location>
        <position position="100"/>
    </location>
</feature>
<feature type="modified residue" description="Phosphotyrosine" evidence="3">
    <location>
        <position position="105"/>
    </location>
</feature>
<feature type="modified residue" description="Phosphoserine" evidence="3">
    <location>
        <position position="127"/>
    </location>
</feature>
<feature type="modified residue" description="Phosphotyrosine" evidence="5">
    <location>
        <position position="148"/>
    </location>
</feature>
<feature type="modified residue" description="N6-acetyllysine; alternate" evidence="3">
    <location>
        <position position="166"/>
    </location>
</feature>
<feature type="modified residue" description="N6-succinyllysine; alternate" evidence="5">
    <location>
        <position position="166"/>
    </location>
</feature>
<feature type="modified residue" description="Phosphotyrosine" evidence="3">
    <location>
        <position position="175"/>
    </location>
</feature>
<feature type="modified residue" description="Phosphothreonine" evidence="3">
    <location>
        <position position="195"/>
    </location>
</feature>
<feature type="modified residue" description="N6-acetyllysine; alternate" evidence="3">
    <location>
        <position position="266"/>
    </location>
</feature>
<feature type="modified residue" description="N6-acetyllysine; alternate" evidence="5">
    <location>
        <position position="270"/>
    </location>
</feature>
<feature type="modified residue" description="N6-acetyllysine" evidence="3">
    <location>
        <position position="305"/>
    </location>
</feature>
<feature type="modified residue" description="N6-acetyllysine; alternate" evidence="5">
    <location>
        <position position="322"/>
    </location>
</feature>
<feature type="modified residue" description="N6-succinyllysine; alternate" evidence="5">
    <location>
        <position position="322"/>
    </location>
</feature>
<feature type="modified residue" description="N6-acetyllysine" evidence="5">
    <location>
        <position position="475"/>
    </location>
</feature>
<feature type="modified residue" description="N6-succinyllysine" evidence="5">
    <location>
        <position position="498"/>
    </location>
</feature>
<feature type="cross-link" description="Glycyl lysine isopeptide (Lys-Gly) (interchain with G-Cter in SUMO2)" evidence="3">
    <location>
        <position position="115"/>
    </location>
</feature>
<feature type="cross-link" description="Glycyl lysine isopeptide (Lys-Gly) (interchain with G-Cter in SUMO1); alternate" evidence="3">
    <location>
        <position position="166"/>
    </location>
</feature>
<feature type="cross-link" description="Glycyl lysine isopeptide (Lys-Gly) (interchain with G-Cter in SUMO2); alternate" evidence="3">
    <location>
        <position position="266"/>
    </location>
</feature>
<feature type="cross-link" description="Glycyl lysine isopeptide (Lys-Gly) (interchain with G-Cter in SUMO2); alternate" evidence="3">
    <location>
        <position position="270"/>
    </location>
</feature>
<feature type="sequence conflict" description="In Ref. 2; AA sequence." evidence="7" ref="2">
    <original>V</original>
    <variation>A</variation>
    <location>
        <position position="209"/>
    </location>
</feature>
<feature type="sequence conflict" description="In Ref. 2; AA sequence." evidence="7" ref="2">
    <original>IQ</original>
    <variation>FE</variation>
    <location>
        <begin position="226"/>
        <end position="227"/>
    </location>
</feature>
<feature type="sequence conflict" description="In Ref. 2; AA sequence." evidence="7" ref="2">
    <original>G</original>
    <variation>Q</variation>
    <location>
        <position position="232"/>
    </location>
</feature>
<feature type="sequence conflict" description="In Ref. 2; AA sequence." evidence="7" ref="2">
    <original>Q</original>
    <variation>R</variation>
    <location>
        <position position="235"/>
    </location>
</feature>
<feature type="helix" evidence="8">
    <location>
        <begin position="18"/>
        <end position="21"/>
    </location>
</feature>
<feature type="helix" evidence="8">
    <location>
        <begin position="26"/>
        <end position="31"/>
    </location>
</feature>
<feature type="strand" evidence="8">
    <location>
        <begin position="45"/>
        <end position="50"/>
    </location>
</feature>
<feature type="turn" evidence="8">
    <location>
        <begin position="53"/>
        <end position="55"/>
    </location>
</feature>
<feature type="helix" evidence="8">
    <location>
        <begin position="58"/>
        <end position="66"/>
    </location>
</feature>
<feature type="strand" evidence="8">
    <location>
        <begin position="69"/>
        <end position="75"/>
    </location>
</feature>
<feature type="helix" evidence="8">
    <location>
        <begin position="81"/>
        <end position="96"/>
    </location>
</feature>
<feature type="turn" evidence="8">
    <location>
        <begin position="97"/>
        <end position="100"/>
    </location>
</feature>
<feature type="turn" evidence="8">
    <location>
        <begin position="102"/>
        <end position="104"/>
    </location>
</feature>
<feature type="strand" evidence="8">
    <location>
        <begin position="109"/>
        <end position="113"/>
    </location>
</feature>
<feature type="strand" evidence="8">
    <location>
        <begin position="119"/>
        <end position="121"/>
    </location>
</feature>
<feature type="strand" evidence="8">
    <location>
        <begin position="139"/>
        <end position="143"/>
    </location>
</feature>
<feature type="strand" evidence="8">
    <location>
        <begin position="148"/>
        <end position="151"/>
    </location>
</feature>
<feature type="strand" evidence="8">
    <location>
        <begin position="154"/>
        <end position="160"/>
    </location>
</feature>
<feature type="helix" evidence="8">
    <location>
        <begin position="164"/>
        <end position="167"/>
    </location>
</feature>
<feature type="strand" evidence="8">
    <location>
        <begin position="173"/>
        <end position="176"/>
    </location>
</feature>
<feature type="turn" evidence="8">
    <location>
        <begin position="177"/>
        <end position="180"/>
    </location>
</feature>
<feature type="strand" evidence="8">
    <location>
        <begin position="181"/>
        <end position="188"/>
    </location>
</feature>
<feature type="strand" evidence="8">
    <location>
        <begin position="190"/>
        <end position="199"/>
    </location>
</feature>
<feature type="strand" evidence="8">
    <location>
        <begin position="208"/>
        <end position="210"/>
    </location>
</feature>
<feature type="helix" evidence="8">
    <location>
        <begin position="223"/>
        <end position="234"/>
    </location>
</feature>
<feature type="strand" evidence="8">
    <location>
        <begin position="238"/>
        <end position="243"/>
    </location>
</feature>
<feature type="helix" evidence="8">
    <location>
        <begin position="248"/>
        <end position="258"/>
    </location>
</feature>
<feature type="turn" evidence="8">
    <location>
        <begin position="259"/>
        <end position="264"/>
    </location>
</feature>
<feature type="strand" evidence="8">
    <location>
        <begin position="265"/>
        <end position="271"/>
    </location>
</feature>
<feature type="helix" evidence="8">
    <location>
        <begin position="275"/>
        <end position="278"/>
    </location>
</feature>
<feature type="helix" evidence="8">
    <location>
        <begin position="280"/>
        <end position="286"/>
    </location>
</feature>
<feature type="strand" evidence="8">
    <location>
        <begin position="287"/>
        <end position="293"/>
    </location>
</feature>
<feature type="helix" evidence="8">
    <location>
        <begin position="294"/>
        <end position="300"/>
    </location>
</feature>
<feature type="turn" evidence="8">
    <location>
        <begin position="303"/>
        <end position="305"/>
    </location>
</feature>
<feature type="helix" evidence="8">
    <location>
        <begin position="306"/>
        <end position="320"/>
    </location>
</feature>
<feature type="strand" evidence="8">
    <location>
        <begin position="324"/>
        <end position="331"/>
    </location>
</feature>
<feature type="helix" evidence="8">
    <location>
        <begin position="332"/>
        <end position="335"/>
    </location>
</feature>
<feature type="helix" evidence="8">
    <location>
        <begin position="342"/>
        <end position="354"/>
    </location>
</feature>
<feature type="strand" evidence="8">
    <location>
        <begin position="357"/>
        <end position="362"/>
    </location>
</feature>
<feature type="helix" evidence="8">
    <location>
        <begin position="363"/>
        <end position="366"/>
    </location>
</feature>
<feature type="helix" evidence="8">
    <location>
        <begin position="371"/>
        <end position="387"/>
    </location>
</feature>
<feature type="helix" evidence="8">
    <location>
        <begin position="391"/>
        <end position="402"/>
    </location>
</feature>
<feature type="helix" evidence="8">
    <location>
        <begin position="408"/>
        <end position="423"/>
    </location>
</feature>
<feature type="strand" evidence="8">
    <location>
        <begin position="428"/>
        <end position="431"/>
    </location>
</feature>
<feature type="strand" evidence="8">
    <location>
        <begin position="433"/>
        <end position="435"/>
    </location>
</feature>
<feature type="helix" evidence="8">
    <location>
        <begin position="436"/>
        <end position="443"/>
    </location>
</feature>
<feature type="strand" evidence="8">
    <location>
        <begin position="450"/>
        <end position="455"/>
    </location>
</feature>
<feature type="helix" evidence="8">
    <location>
        <begin position="457"/>
        <end position="462"/>
    </location>
</feature>
<feature type="helix" evidence="8">
    <location>
        <begin position="463"/>
        <end position="465"/>
    </location>
</feature>
<feature type="strand" evidence="8">
    <location>
        <begin position="469"/>
        <end position="473"/>
    </location>
</feature>
<feature type="helix" evidence="8">
    <location>
        <begin position="482"/>
        <end position="499"/>
    </location>
</feature>
<feature type="strand" evidence="8">
    <location>
        <begin position="508"/>
        <end position="513"/>
    </location>
</feature>
<feature type="strand" evidence="8">
    <location>
        <begin position="524"/>
        <end position="529"/>
    </location>
</feature>
<sequence>MSKPHSDVGTAFIQTQQLHAAMADTFLEHMCRLDIDSPPITARNTGIICTIGPASRSVEILKEMIKSGMNVARLNFSHGTHEYHAETIKNVRAATESFASDPIRYRPVAVALDTKGPEIRTGLIKGSGTAEVELKKGATLKITLDNAYMEKCDENVLWLDYKNICKVVEVGSKVYVDDGLISLLVKEKGADFLVTEVENGGSLGSKKGVNLPGAAVDLPAVSEKDIQDLKFGVEQDVDMVFASFIRKASDVHEVRKVLGEKGKNIKIISKIENHEGVRRFDEILEASDGIMVARGDLGIEIPAEKVFLAQKMMIGRCNRAGKPVICATQMLESMIKKPRPTRAEGSDVANAVLDGADCIMLSGETAKGDYPLEAVRMQHLIAREAEAAMFHRKLFEELVRGSSHSTDLMEAMAMGSVEASYKCLAAALIVLTESGRSAHQVARYRPRAPIIAVTRNHQTARQAHLYRGIFPVVCKDPVQEAWAEDVDLRVNLAMNVGKARGFFKHGDVVIVLTGWRPGSGFTNTMRVVPVP</sequence>
<protein>
    <recommendedName>
        <fullName>Pyruvate kinase PKM</fullName>
        <ecNumber>2.7.1.40</ecNumber>
    </recommendedName>
    <alternativeName>
        <fullName>Pyruvate kinase muscle isozyme</fullName>
    </alternativeName>
    <alternativeName>
        <fullName evidence="7">Threonine-protein kinase PKM2</fullName>
        <ecNumber evidence="3">2.7.11.1</ecNumber>
    </alternativeName>
    <alternativeName>
        <fullName evidence="7">Tyrosine-protein kinase PKM2</fullName>
        <ecNumber evidence="3">2.7.10.2</ecNumber>
    </alternativeName>
</protein>
<keyword id="KW-0002">3D-structure</keyword>
<keyword id="KW-0007">Acetylation</keyword>
<keyword id="KW-0021">Allosteric enzyme</keyword>
<keyword id="KW-0025">Alternative splicing</keyword>
<keyword id="KW-0067">ATP-binding</keyword>
<keyword id="KW-0963">Cytoplasm</keyword>
<keyword id="KW-0903">Direct protein sequencing</keyword>
<keyword id="KW-0324">Glycolysis</keyword>
<keyword id="KW-1017">Isopeptide bond</keyword>
<keyword id="KW-0418">Kinase</keyword>
<keyword id="KW-0460">Magnesium</keyword>
<keyword id="KW-0479">Metal-binding</keyword>
<keyword id="KW-0488">Methylation</keyword>
<keyword id="KW-0547">Nucleotide-binding</keyword>
<keyword id="KW-0539">Nucleus</keyword>
<keyword id="KW-0597">Phosphoprotein</keyword>
<keyword id="KW-0630">Potassium</keyword>
<keyword id="KW-0670">Pyruvate</keyword>
<keyword id="KW-1185">Reference proteome</keyword>
<keyword id="KW-0702">S-nitrosylation</keyword>
<keyword id="KW-0808">Transferase</keyword>
<keyword id="KW-0810">Translation regulation</keyword>
<keyword id="KW-0832">Ubl conjugation</keyword>
<evidence type="ECO:0000250" key="1">
    <source>
        <dbReference type="UniProtKB" id="P00549"/>
    </source>
</evidence>
<evidence type="ECO:0000250" key="2">
    <source>
        <dbReference type="UniProtKB" id="P11980"/>
    </source>
</evidence>
<evidence type="ECO:0000250" key="3">
    <source>
        <dbReference type="UniProtKB" id="P14618"/>
    </source>
</evidence>
<evidence type="ECO:0000250" key="4">
    <source>
        <dbReference type="UniProtKB" id="P30613"/>
    </source>
</evidence>
<evidence type="ECO:0000250" key="5">
    <source>
        <dbReference type="UniProtKB" id="P52480"/>
    </source>
</evidence>
<evidence type="ECO:0000269" key="6">
    <source>
    </source>
</evidence>
<evidence type="ECO:0000305" key="7"/>
<evidence type="ECO:0007829" key="8">
    <source>
        <dbReference type="PDB" id="1PKM"/>
    </source>
</evidence>
<organism>
    <name type="scientific">Felis catus</name>
    <name type="common">Cat</name>
    <name type="synonym">Felis silvestris catus</name>
    <dbReference type="NCBI Taxonomy" id="9685"/>
    <lineage>
        <taxon>Eukaryota</taxon>
        <taxon>Metazoa</taxon>
        <taxon>Chordata</taxon>
        <taxon>Craniata</taxon>
        <taxon>Vertebrata</taxon>
        <taxon>Euteleostomi</taxon>
        <taxon>Mammalia</taxon>
        <taxon>Eutheria</taxon>
        <taxon>Laurasiatheria</taxon>
        <taxon>Carnivora</taxon>
        <taxon>Feliformia</taxon>
        <taxon>Felidae</taxon>
        <taxon>Felinae</taxon>
        <taxon>Felis</taxon>
    </lineage>
</organism>
<proteinExistence type="evidence at protein level"/>
<reference key="1">
    <citation type="journal article" date="1986" name="EMBO J.">
        <title>The structure of cat muscle pyruvate kinase.</title>
        <authorList>
            <person name="Muirhead H."/>
            <person name="Clayden D.A."/>
            <person name="Barford D."/>
            <person name="Lorimer C.G."/>
            <person name="Fothergill-Gilmore L.A."/>
            <person name="Schiltz E."/>
            <person name="Schmitt W."/>
        </authorList>
    </citation>
    <scope>PROTEIN SEQUENCE OF 2-531</scope>
    <scope>ACETYLATION AT SER-2</scope>
</reference>
<reference key="2">
    <citation type="journal article" date="1982" name="Biochem. Soc. Trans.">
        <title>Hydroxylamine cleavage of cat skeletal-muscle pyruvate kinase: separation of the fragments and N-terminal sequence analysis.</title>
        <authorList>
            <person name="McAleese S.M."/>
            <person name="Hoar C.G."/>
            <person name="Dunbar B."/>
            <person name="Fothergill-Gilmore L.A."/>
        </authorList>
    </citation>
    <scope>PROTEIN SEQUENCE OF 200-236</scope>
</reference>
<reference key="3">
    <citation type="journal article" date="1983" name="Eur. J. Biochem.">
        <title>A comparison of the structure and activity of cat and trout muscle pyruvate kinases.</title>
        <authorList>
            <person name="Harkins R.N."/>
            <person name="Nocton J.C."/>
            <person name="Russell M.P."/>
            <person name="Fothergill-Gilmore L.A."/>
            <person name="Muirhead H."/>
        </authorList>
    </citation>
    <scope>PROTEIN SEQUENCE OF 314-330</scope>
</reference>
<reference key="4">
    <citation type="journal article" date="1979" name="J. Mol. Biol.">
        <title>Crystal structure of cat muscle pyruvate kinase at a resolution of 2.6 A.</title>
        <authorList>
            <person name="Stuart D.I."/>
            <person name="Levine M."/>
            <person name="Muirhead H."/>
            <person name="Stammers D.K."/>
        </authorList>
    </citation>
    <scope>X-RAY CRYSTALLOGRAPHY (2.6 ANGSTROMS)</scope>
</reference>
<reference key="5">
    <citation type="journal article" date="1977" name="J. Mol. Biol.">
        <title>Three-dimensional structure of cat muscle pyruvate kinase at 3.1-A resolution.</title>
        <authorList>
            <person name="Stammers D.K."/>
            <person name="Muirhead H."/>
        </authorList>
    </citation>
    <scope>X-RAY CRYSTALLOGRAPHY (3.1 ANGSTROMS)</scope>
</reference>
<reference key="6">
    <citation type="journal article" date="1975" name="J. Mol. Biol.">
        <title>Three-dimensional structure of cat muscle pyruvate kinase at 6-A resolution.</title>
        <authorList>
            <person name="Stammers D.K."/>
            <person name="Muirhead H."/>
        </authorList>
    </citation>
    <scope>X-RAY CRYSTALLOGRAPHY (6.0 ANGSTROMS)</scope>
</reference>
<reference key="7">
    <citation type="journal article" date="1996" name="Acta Crystallogr. D">
        <title>Refined three-dimensional structure of cat-muscle (M1) pyruvate kinase at a resolution of 2.6 A.</title>
        <authorList>
            <person name="Allen S.C."/>
            <person name="Muirhead H."/>
        </authorList>
    </citation>
    <scope>X-RAY CRYSTALLOGRAPHY (2.6 ANGSTROMS)</scope>
</reference>